<proteinExistence type="evidence at protein level"/>
<sequence length="180" mass="18471">MKTAARIVAFTALTGFALGMPTVAMAEMETTEKSAVVSQAATDSAMTIVEVAAGNETFSTLVAAVKAADLVEALSAEGPFTVFAPTNDAFAALPAGTVESLLLPENKDKLVKILTYHVVPGKITAAQVQSGEVASLAGEALTFKVKDGKVKVNKATVISADVDASNGVIHVIDQVILPPM</sequence>
<feature type="signal peptide" evidence="1">
    <location>
        <begin position="1"/>
        <end position="26"/>
    </location>
</feature>
<feature type="chain" id="PRO_0000014236" description="Protein sll1483">
    <location>
        <begin position="27"/>
        <end position="180"/>
    </location>
</feature>
<feature type="domain" description="FAS1" evidence="2">
    <location>
        <begin position="45"/>
        <end position="176"/>
    </location>
</feature>
<protein>
    <recommendedName>
        <fullName>Protein sll1483</fullName>
    </recommendedName>
</protein>
<gene>
    <name type="ordered locus">sll1483</name>
</gene>
<dbReference type="EMBL" id="BA000022">
    <property type="protein sequence ID" value="BAA18723.1"/>
    <property type="molecule type" value="Genomic_DNA"/>
</dbReference>
<dbReference type="PIR" id="S76811">
    <property type="entry name" value="S76811"/>
</dbReference>
<dbReference type="SMR" id="P74615"/>
<dbReference type="IntAct" id="P74615">
    <property type="interactions" value="4"/>
</dbReference>
<dbReference type="STRING" id="1148.gene:10500495"/>
<dbReference type="PaxDb" id="1148-1653812"/>
<dbReference type="EnsemblBacteria" id="BAA18723">
    <property type="protein sequence ID" value="BAA18723"/>
    <property type="gene ID" value="BAA18723"/>
</dbReference>
<dbReference type="KEGG" id="syn:sll1483"/>
<dbReference type="eggNOG" id="COG2335">
    <property type="taxonomic scope" value="Bacteria"/>
</dbReference>
<dbReference type="InParanoid" id="P74615"/>
<dbReference type="PhylomeDB" id="P74615"/>
<dbReference type="Proteomes" id="UP000001425">
    <property type="component" value="Chromosome"/>
</dbReference>
<dbReference type="GO" id="GO:0030288">
    <property type="term" value="C:outer membrane-bounded periplasmic space"/>
    <property type="evidence" value="ECO:0007005"/>
    <property type="project" value="UniProtKB"/>
</dbReference>
<dbReference type="FunFam" id="2.30.180.10:FF:000019">
    <property type="entry name" value="Cell surface lipoprotein"/>
    <property type="match status" value="1"/>
</dbReference>
<dbReference type="Gene3D" id="2.30.180.10">
    <property type="entry name" value="FAS1 domain"/>
    <property type="match status" value="1"/>
</dbReference>
<dbReference type="InterPro" id="IPR050904">
    <property type="entry name" value="Adhesion/Biosynth-related"/>
</dbReference>
<dbReference type="InterPro" id="IPR036378">
    <property type="entry name" value="FAS1_dom_sf"/>
</dbReference>
<dbReference type="InterPro" id="IPR000782">
    <property type="entry name" value="FAS1_domain"/>
</dbReference>
<dbReference type="PANTHER" id="PTHR10900:SF77">
    <property type="entry name" value="FI19380P1"/>
    <property type="match status" value="1"/>
</dbReference>
<dbReference type="PANTHER" id="PTHR10900">
    <property type="entry name" value="PERIOSTIN-RELATED"/>
    <property type="match status" value="1"/>
</dbReference>
<dbReference type="Pfam" id="PF02469">
    <property type="entry name" value="Fasciclin"/>
    <property type="match status" value="1"/>
</dbReference>
<dbReference type="SMART" id="SM00554">
    <property type="entry name" value="FAS1"/>
    <property type="match status" value="1"/>
</dbReference>
<dbReference type="SUPFAM" id="SSF82153">
    <property type="entry name" value="FAS1 domain"/>
    <property type="match status" value="1"/>
</dbReference>
<dbReference type="PROSITE" id="PS50213">
    <property type="entry name" value="FAS1"/>
    <property type="match status" value="1"/>
</dbReference>
<accession>P74615</accession>
<keyword id="KW-0903">Direct protein sequencing</keyword>
<keyword id="KW-1185">Reference proteome</keyword>
<keyword id="KW-0732">Signal</keyword>
<name>Y1483_SYNY3</name>
<evidence type="ECO:0000255" key="1"/>
<evidence type="ECO:0000255" key="2">
    <source>
        <dbReference type="PROSITE-ProRule" id="PRU00082"/>
    </source>
</evidence>
<reference key="1">
    <citation type="journal article" date="1996" name="DNA Res.">
        <title>Sequence analysis of the genome of the unicellular cyanobacterium Synechocystis sp. strain PCC6803. II. Sequence determination of the entire genome and assignment of potential protein-coding regions.</title>
        <authorList>
            <person name="Kaneko T."/>
            <person name="Sato S."/>
            <person name="Kotani H."/>
            <person name="Tanaka A."/>
            <person name="Asamizu E."/>
            <person name="Nakamura Y."/>
            <person name="Miyajima N."/>
            <person name="Hirosawa M."/>
            <person name="Sugiura M."/>
            <person name="Sasamoto S."/>
            <person name="Kimura T."/>
            <person name="Hosouchi T."/>
            <person name="Matsuno A."/>
            <person name="Muraki A."/>
            <person name="Nakazaki N."/>
            <person name="Naruo K."/>
            <person name="Okumura S."/>
            <person name="Shimpo S."/>
            <person name="Takeuchi C."/>
            <person name="Wada T."/>
            <person name="Watanabe A."/>
            <person name="Yamada M."/>
            <person name="Yasuda M."/>
            <person name="Tabata S."/>
        </authorList>
    </citation>
    <scope>NUCLEOTIDE SEQUENCE [LARGE SCALE GENOMIC DNA]</scope>
    <source>
        <strain>ATCC 27184 / PCC 6803 / Kazusa</strain>
    </source>
</reference>
<reference key="2">
    <citation type="journal article" date="1997" name="Electrophoresis">
        <title>Towards a proteome project of cyanobacterium Synechocystis sp. strain PCC6803: linking 130 protein spots with their respective genes.</title>
        <authorList>
            <person name="Sazuka T."/>
            <person name="Ohara O."/>
        </authorList>
    </citation>
    <scope>PROTEIN SEQUENCE OF 27-34</scope>
</reference>
<organism>
    <name type="scientific">Synechocystis sp. (strain ATCC 27184 / PCC 6803 / Kazusa)</name>
    <dbReference type="NCBI Taxonomy" id="1111708"/>
    <lineage>
        <taxon>Bacteria</taxon>
        <taxon>Bacillati</taxon>
        <taxon>Cyanobacteriota</taxon>
        <taxon>Cyanophyceae</taxon>
        <taxon>Synechococcales</taxon>
        <taxon>Merismopediaceae</taxon>
        <taxon>Synechocystis</taxon>
    </lineage>
</organism>